<dbReference type="EMBL" id="AL022605">
    <property type="protein sequence ID" value="CAA18762.1"/>
    <property type="molecule type" value="Genomic_DNA"/>
</dbReference>
<dbReference type="EMBL" id="AL161595">
    <property type="protein sequence ID" value="CAB80639.1"/>
    <property type="molecule type" value="Genomic_DNA"/>
</dbReference>
<dbReference type="EMBL" id="CP002687">
    <property type="protein sequence ID" value="AEE87116.1"/>
    <property type="molecule type" value="Genomic_DNA"/>
</dbReference>
<dbReference type="PIR" id="T05013">
    <property type="entry name" value="T05013"/>
</dbReference>
<dbReference type="RefSeq" id="NP_195686.1">
    <property type="nucleotide sequence ID" value="NM_120139.1"/>
</dbReference>
<dbReference type="SMR" id="O65663"/>
<dbReference type="BioGRID" id="15414">
    <property type="interactions" value="2"/>
</dbReference>
<dbReference type="FunCoup" id="O65663">
    <property type="interactions" value="3"/>
</dbReference>
<dbReference type="PaxDb" id="3702-AT4G39760.1"/>
<dbReference type="EnsemblPlants" id="AT4G39760.1">
    <property type="protein sequence ID" value="AT4G39760.1"/>
    <property type="gene ID" value="AT4G39760"/>
</dbReference>
<dbReference type="GeneID" id="830134"/>
<dbReference type="Gramene" id="AT4G39760.1">
    <property type="protein sequence ID" value="AT4G39760.1"/>
    <property type="gene ID" value="AT4G39760"/>
</dbReference>
<dbReference type="KEGG" id="ath:AT4G39760"/>
<dbReference type="Araport" id="AT4G39760"/>
<dbReference type="TAIR" id="AT4G39760"/>
<dbReference type="eggNOG" id="KOG1072">
    <property type="taxonomic scope" value="Eukaryota"/>
</dbReference>
<dbReference type="HOGENOM" id="CLU_032521_1_2_1"/>
<dbReference type="InParanoid" id="O65663"/>
<dbReference type="OMA" id="KIWCAMI"/>
<dbReference type="PhylomeDB" id="O65663"/>
<dbReference type="PRO" id="PR:O65663"/>
<dbReference type="Proteomes" id="UP000006548">
    <property type="component" value="Chromosome 4"/>
</dbReference>
<dbReference type="ExpressionAtlas" id="O65663">
    <property type="expression patterns" value="baseline and differential"/>
</dbReference>
<dbReference type="CDD" id="cd22152">
    <property type="entry name" value="F-box_AtAFR-like"/>
    <property type="match status" value="1"/>
</dbReference>
<dbReference type="Gene3D" id="2.120.10.80">
    <property type="entry name" value="Kelch-type beta propeller"/>
    <property type="match status" value="1"/>
</dbReference>
<dbReference type="InterPro" id="IPR036047">
    <property type="entry name" value="F-box-like_dom_sf"/>
</dbReference>
<dbReference type="InterPro" id="IPR050354">
    <property type="entry name" value="F-box/kelch-repeat_ARATH"/>
</dbReference>
<dbReference type="InterPro" id="IPR001810">
    <property type="entry name" value="F-box_dom"/>
</dbReference>
<dbReference type="InterPro" id="IPR015915">
    <property type="entry name" value="Kelch-typ_b-propeller"/>
</dbReference>
<dbReference type="PANTHER" id="PTHR24414:SF185">
    <property type="entry name" value="F-BOX DOMAIN-CONTAINING PROTEIN"/>
    <property type="match status" value="1"/>
</dbReference>
<dbReference type="PANTHER" id="PTHR24414">
    <property type="entry name" value="F-BOX/KELCH-REPEAT PROTEIN SKIP4"/>
    <property type="match status" value="1"/>
</dbReference>
<dbReference type="Pfam" id="PF00646">
    <property type="entry name" value="F-box"/>
    <property type="match status" value="1"/>
</dbReference>
<dbReference type="Pfam" id="PF25210">
    <property type="entry name" value="Kelch_FKB95"/>
    <property type="match status" value="1"/>
</dbReference>
<dbReference type="SMART" id="SM00256">
    <property type="entry name" value="FBOX"/>
    <property type="match status" value="1"/>
</dbReference>
<dbReference type="SUPFAM" id="SSF81383">
    <property type="entry name" value="F-box domain"/>
    <property type="match status" value="1"/>
</dbReference>
<dbReference type="SUPFAM" id="SSF117281">
    <property type="entry name" value="Kelch motif"/>
    <property type="match status" value="1"/>
</dbReference>
<dbReference type="PROSITE" id="PS50181">
    <property type="entry name" value="FBOX"/>
    <property type="match status" value="1"/>
</dbReference>
<keyword id="KW-0880">Kelch repeat</keyword>
<keyword id="KW-1185">Reference proteome</keyword>
<keyword id="KW-0677">Repeat</keyword>
<protein>
    <recommendedName>
        <fullName>Putative F-box/kelch-repeat protein At4g39760</fullName>
    </recommendedName>
</protein>
<sequence>MISQEEVPQSTNHSLSFSSLPHEIVVSCLARVSGSYYPKLCLVSKQFRSIILSNEIYKARSHLGTKENRLFVWLKLPTRSYPSWFALWIKPNETLTNDGPIKKQSTGNLLVPLPCSYNYQVLVPSVIVGSETYIVGGYDDALSSSVWFYKNGKIHTLSKSPSMSVARIDAVVVGQYPNIYVMGGCDSDESMNWGEVFNIKTQTWEPLPDPGPEVRGQLVRKMKMQKKNVYVSSEKKDYIYDTEERTWKVTEAVFNFSWCVIEKVRYIYYNKNCWWLDTKSKDWRKIKGLDFLNKFRETDRIEIVNLDGKLVMIWDRFTLSKRNKKIWCAMIALEKCQGCEGIWGKIEWIGDVLMVPLSYSFLDCMVISI</sequence>
<gene>
    <name type="ordered locus">At4g39760</name>
    <name type="ORF">T19P19.150</name>
</gene>
<accession>O65663</accession>
<feature type="chain" id="PRO_0000283262" description="Putative F-box/kelch-repeat protein At4g39760">
    <location>
        <begin position="1"/>
        <end position="369"/>
    </location>
</feature>
<feature type="domain" description="F-box" evidence="1">
    <location>
        <begin position="14"/>
        <end position="60"/>
    </location>
</feature>
<feature type="repeat" description="Kelch 1">
    <location>
        <begin position="131"/>
        <end position="177"/>
    </location>
</feature>
<feature type="repeat" description="Kelch 2">
    <location>
        <begin position="178"/>
        <end position="224"/>
    </location>
</feature>
<feature type="repeat" description="Kelch 3">
    <location>
        <begin position="228"/>
        <end position="274"/>
    </location>
</feature>
<name>FK106_ARATH</name>
<organism>
    <name type="scientific">Arabidopsis thaliana</name>
    <name type="common">Mouse-ear cress</name>
    <dbReference type="NCBI Taxonomy" id="3702"/>
    <lineage>
        <taxon>Eukaryota</taxon>
        <taxon>Viridiplantae</taxon>
        <taxon>Streptophyta</taxon>
        <taxon>Embryophyta</taxon>
        <taxon>Tracheophyta</taxon>
        <taxon>Spermatophyta</taxon>
        <taxon>Magnoliopsida</taxon>
        <taxon>eudicotyledons</taxon>
        <taxon>Gunneridae</taxon>
        <taxon>Pentapetalae</taxon>
        <taxon>rosids</taxon>
        <taxon>malvids</taxon>
        <taxon>Brassicales</taxon>
        <taxon>Brassicaceae</taxon>
        <taxon>Camelineae</taxon>
        <taxon>Arabidopsis</taxon>
    </lineage>
</organism>
<proteinExistence type="predicted"/>
<reference key="1">
    <citation type="journal article" date="1999" name="Nature">
        <title>Sequence and analysis of chromosome 4 of the plant Arabidopsis thaliana.</title>
        <authorList>
            <person name="Mayer K.F.X."/>
            <person name="Schueller C."/>
            <person name="Wambutt R."/>
            <person name="Murphy G."/>
            <person name="Volckaert G."/>
            <person name="Pohl T."/>
            <person name="Duesterhoeft A."/>
            <person name="Stiekema W."/>
            <person name="Entian K.-D."/>
            <person name="Terryn N."/>
            <person name="Harris B."/>
            <person name="Ansorge W."/>
            <person name="Brandt P."/>
            <person name="Grivell L.A."/>
            <person name="Rieger M."/>
            <person name="Weichselgartner M."/>
            <person name="de Simone V."/>
            <person name="Obermaier B."/>
            <person name="Mache R."/>
            <person name="Mueller M."/>
            <person name="Kreis M."/>
            <person name="Delseny M."/>
            <person name="Puigdomenech P."/>
            <person name="Watson M."/>
            <person name="Schmidtheini T."/>
            <person name="Reichert B."/>
            <person name="Portetelle D."/>
            <person name="Perez-Alonso M."/>
            <person name="Boutry M."/>
            <person name="Bancroft I."/>
            <person name="Vos P."/>
            <person name="Hoheisel J."/>
            <person name="Zimmermann W."/>
            <person name="Wedler H."/>
            <person name="Ridley P."/>
            <person name="Langham S.-A."/>
            <person name="McCullagh B."/>
            <person name="Bilham L."/>
            <person name="Robben J."/>
            <person name="van der Schueren J."/>
            <person name="Grymonprez B."/>
            <person name="Chuang Y.-J."/>
            <person name="Vandenbussche F."/>
            <person name="Braeken M."/>
            <person name="Weltjens I."/>
            <person name="Voet M."/>
            <person name="Bastiaens I."/>
            <person name="Aert R."/>
            <person name="Defoor E."/>
            <person name="Weitzenegger T."/>
            <person name="Bothe G."/>
            <person name="Ramsperger U."/>
            <person name="Hilbert H."/>
            <person name="Braun M."/>
            <person name="Holzer E."/>
            <person name="Brandt A."/>
            <person name="Peters S."/>
            <person name="van Staveren M."/>
            <person name="Dirkse W."/>
            <person name="Mooijman P."/>
            <person name="Klein Lankhorst R."/>
            <person name="Rose M."/>
            <person name="Hauf J."/>
            <person name="Koetter P."/>
            <person name="Berneiser S."/>
            <person name="Hempel S."/>
            <person name="Feldpausch M."/>
            <person name="Lamberth S."/>
            <person name="Van den Daele H."/>
            <person name="De Keyser A."/>
            <person name="Buysshaert C."/>
            <person name="Gielen J."/>
            <person name="Villarroel R."/>
            <person name="De Clercq R."/>
            <person name="van Montagu M."/>
            <person name="Rogers J."/>
            <person name="Cronin A."/>
            <person name="Quail M.A."/>
            <person name="Bray-Allen S."/>
            <person name="Clark L."/>
            <person name="Doggett J."/>
            <person name="Hall S."/>
            <person name="Kay M."/>
            <person name="Lennard N."/>
            <person name="McLay K."/>
            <person name="Mayes R."/>
            <person name="Pettett A."/>
            <person name="Rajandream M.A."/>
            <person name="Lyne M."/>
            <person name="Benes V."/>
            <person name="Rechmann S."/>
            <person name="Borkova D."/>
            <person name="Bloecker H."/>
            <person name="Scharfe M."/>
            <person name="Grimm M."/>
            <person name="Loehnert T.-H."/>
            <person name="Dose S."/>
            <person name="de Haan M."/>
            <person name="Maarse A.C."/>
            <person name="Schaefer M."/>
            <person name="Mueller-Auer S."/>
            <person name="Gabel C."/>
            <person name="Fuchs M."/>
            <person name="Fartmann B."/>
            <person name="Granderath K."/>
            <person name="Dauner D."/>
            <person name="Herzl A."/>
            <person name="Neumann S."/>
            <person name="Argiriou A."/>
            <person name="Vitale D."/>
            <person name="Liguori R."/>
            <person name="Piravandi E."/>
            <person name="Massenet O."/>
            <person name="Quigley F."/>
            <person name="Clabauld G."/>
            <person name="Muendlein A."/>
            <person name="Felber R."/>
            <person name="Schnabl S."/>
            <person name="Hiller R."/>
            <person name="Schmidt W."/>
            <person name="Lecharny A."/>
            <person name="Aubourg S."/>
            <person name="Chefdor F."/>
            <person name="Cooke R."/>
            <person name="Berger C."/>
            <person name="Monfort A."/>
            <person name="Casacuberta E."/>
            <person name="Gibbons T."/>
            <person name="Weber N."/>
            <person name="Vandenbol M."/>
            <person name="Bargues M."/>
            <person name="Terol J."/>
            <person name="Torres A."/>
            <person name="Perez-Perez A."/>
            <person name="Purnelle B."/>
            <person name="Bent E."/>
            <person name="Johnson S."/>
            <person name="Tacon D."/>
            <person name="Jesse T."/>
            <person name="Heijnen L."/>
            <person name="Schwarz S."/>
            <person name="Scholler P."/>
            <person name="Heber S."/>
            <person name="Francs P."/>
            <person name="Bielke C."/>
            <person name="Frishman D."/>
            <person name="Haase D."/>
            <person name="Lemcke K."/>
            <person name="Mewes H.-W."/>
            <person name="Stocker S."/>
            <person name="Zaccaria P."/>
            <person name="Bevan M."/>
            <person name="Wilson R.K."/>
            <person name="de la Bastide M."/>
            <person name="Habermann K."/>
            <person name="Parnell L."/>
            <person name="Dedhia N."/>
            <person name="Gnoj L."/>
            <person name="Schutz K."/>
            <person name="Huang E."/>
            <person name="Spiegel L."/>
            <person name="Sekhon M."/>
            <person name="Murray J."/>
            <person name="Sheet P."/>
            <person name="Cordes M."/>
            <person name="Abu-Threideh J."/>
            <person name="Stoneking T."/>
            <person name="Kalicki J."/>
            <person name="Graves T."/>
            <person name="Harmon G."/>
            <person name="Edwards J."/>
            <person name="Latreille P."/>
            <person name="Courtney L."/>
            <person name="Cloud J."/>
            <person name="Abbott A."/>
            <person name="Scott K."/>
            <person name="Johnson D."/>
            <person name="Minx P."/>
            <person name="Bentley D."/>
            <person name="Fulton B."/>
            <person name="Miller N."/>
            <person name="Greco T."/>
            <person name="Kemp K."/>
            <person name="Kramer J."/>
            <person name="Fulton L."/>
            <person name="Mardis E."/>
            <person name="Dante M."/>
            <person name="Pepin K."/>
            <person name="Hillier L.W."/>
            <person name="Nelson J."/>
            <person name="Spieth J."/>
            <person name="Ryan E."/>
            <person name="Andrews S."/>
            <person name="Geisel C."/>
            <person name="Layman D."/>
            <person name="Du H."/>
            <person name="Ali J."/>
            <person name="Berghoff A."/>
            <person name="Jones K."/>
            <person name="Drone K."/>
            <person name="Cotton M."/>
            <person name="Joshu C."/>
            <person name="Antonoiu B."/>
            <person name="Zidanic M."/>
            <person name="Strong C."/>
            <person name="Sun H."/>
            <person name="Lamar B."/>
            <person name="Yordan C."/>
            <person name="Ma P."/>
            <person name="Zhong J."/>
            <person name="Preston R."/>
            <person name="Vil D."/>
            <person name="Shekher M."/>
            <person name="Matero A."/>
            <person name="Shah R."/>
            <person name="Swaby I.K."/>
            <person name="O'Shaughnessy A."/>
            <person name="Rodriguez M."/>
            <person name="Hoffman J."/>
            <person name="Till S."/>
            <person name="Granat S."/>
            <person name="Shohdy N."/>
            <person name="Hasegawa A."/>
            <person name="Hameed A."/>
            <person name="Lodhi M."/>
            <person name="Johnson A."/>
            <person name="Chen E."/>
            <person name="Marra M.A."/>
            <person name="Martienssen R."/>
            <person name="McCombie W.R."/>
        </authorList>
    </citation>
    <scope>NUCLEOTIDE SEQUENCE [LARGE SCALE GENOMIC DNA]</scope>
    <source>
        <strain>cv. Columbia</strain>
    </source>
</reference>
<reference key="2">
    <citation type="journal article" date="2017" name="Plant J.">
        <title>Araport11: a complete reannotation of the Arabidopsis thaliana reference genome.</title>
        <authorList>
            <person name="Cheng C.Y."/>
            <person name="Krishnakumar V."/>
            <person name="Chan A.P."/>
            <person name="Thibaud-Nissen F."/>
            <person name="Schobel S."/>
            <person name="Town C.D."/>
        </authorList>
    </citation>
    <scope>GENOME REANNOTATION</scope>
    <source>
        <strain>cv. Columbia</strain>
    </source>
</reference>
<evidence type="ECO:0000255" key="1">
    <source>
        <dbReference type="PROSITE-ProRule" id="PRU00080"/>
    </source>
</evidence>